<reference key="1">
    <citation type="journal article" date="2008" name="Nat. Biotechnol.">
        <title>Genome sequencing and analysis of the filamentous fungus Penicillium chrysogenum.</title>
        <authorList>
            <person name="van den Berg M.A."/>
            <person name="Albang R."/>
            <person name="Albermann K."/>
            <person name="Badger J.H."/>
            <person name="Daran J.-M."/>
            <person name="Driessen A.J.M."/>
            <person name="Garcia-Estrada C."/>
            <person name="Fedorova N.D."/>
            <person name="Harris D.M."/>
            <person name="Heijne W.H.M."/>
            <person name="Joardar V.S."/>
            <person name="Kiel J.A.K.W."/>
            <person name="Kovalchuk A."/>
            <person name="Martin J.F."/>
            <person name="Nierman W.C."/>
            <person name="Nijland J.G."/>
            <person name="Pronk J.T."/>
            <person name="Roubos J.A."/>
            <person name="van der Klei I.J."/>
            <person name="van Peij N.N.M.E."/>
            <person name="Veenhuis M."/>
            <person name="von Doehren H."/>
            <person name="Wagner C."/>
            <person name="Wortman J.R."/>
            <person name="Bovenberg R.A.L."/>
        </authorList>
    </citation>
    <scope>NUCLEOTIDE SEQUENCE [LARGE SCALE GENOMIC DNA]</scope>
    <source>
        <strain>ATCC 28089 / DSM 1075 / NRRL 1951 / Wisconsin 54-1255</strain>
    </source>
</reference>
<reference key="2">
    <citation type="journal article" date="2017" name="Microb. Biotechnol.">
        <title>Mechanism and regulation of sorbicillin biosynthesis by Penicillium chrysogenum.</title>
        <authorList>
            <person name="Guzman-Chavez F."/>
            <person name="Salo O."/>
            <person name="Nygaard Y."/>
            <person name="Lankhorst P.P."/>
            <person name="Bovenberg R.A.L."/>
            <person name="Driessen A.J.M."/>
        </authorList>
    </citation>
    <scope>FUNCTION</scope>
    <scope>DISRUPTION PHENOTYPE</scope>
</reference>
<feature type="chain" id="PRO_0000443840" description="Sorbicillinoid biosynthetic cluster transcription factor 2">
    <location>
        <begin position="1"/>
        <end position="684"/>
    </location>
</feature>
<feature type="region of interest" description="Disordered" evidence="1">
    <location>
        <begin position="114"/>
        <end position="151"/>
    </location>
</feature>
<proteinExistence type="predicted"/>
<accession>B6HNK4</accession>
<dbReference type="EMBL" id="AM920436">
    <property type="protein sequence ID" value="CAP95406.1"/>
    <property type="molecule type" value="Genomic_DNA"/>
</dbReference>
<dbReference type="RefSeq" id="XP_002567555.1">
    <property type="nucleotide sequence ID" value="XM_002567509.1"/>
</dbReference>
<dbReference type="STRING" id="500485.B6HNK4"/>
<dbReference type="GeneID" id="8313806"/>
<dbReference type="KEGG" id="pcs:N7525_006990"/>
<dbReference type="VEuPathDB" id="FungiDB:PCH_Pc21g05090"/>
<dbReference type="eggNOG" id="ENOG502RBGV">
    <property type="taxonomic scope" value="Eukaryota"/>
</dbReference>
<dbReference type="HOGENOM" id="CLU_008511_3_1_1"/>
<dbReference type="OMA" id="CLMLMNR"/>
<dbReference type="OrthoDB" id="424974at2759"/>
<dbReference type="BioCyc" id="PCHR:PC21G05090-MONOMER"/>
<dbReference type="Proteomes" id="UP000000724">
    <property type="component" value="Contig Pc00c21"/>
</dbReference>
<dbReference type="GO" id="GO:0005634">
    <property type="term" value="C:nucleus"/>
    <property type="evidence" value="ECO:0007669"/>
    <property type="project" value="UniProtKB-SubCell"/>
</dbReference>
<dbReference type="GO" id="GO:0000981">
    <property type="term" value="F:DNA-binding transcription factor activity, RNA polymerase II-specific"/>
    <property type="evidence" value="ECO:0007669"/>
    <property type="project" value="TreeGrafter"/>
</dbReference>
<dbReference type="GO" id="GO:0000978">
    <property type="term" value="F:RNA polymerase II cis-regulatory region sequence-specific DNA binding"/>
    <property type="evidence" value="ECO:0007669"/>
    <property type="project" value="TreeGrafter"/>
</dbReference>
<dbReference type="GO" id="GO:0008270">
    <property type="term" value="F:zinc ion binding"/>
    <property type="evidence" value="ECO:0007669"/>
    <property type="project" value="InterPro"/>
</dbReference>
<dbReference type="GO" id="GO:0006351">
    <property type="term" value="P:DNA-templated transcription"/>
    <property type="evidence" value="ECO:0007669"/>
    <property type="project" value="InterPro"/>
</dbReference>
<dbReference type="GO" id="GO:0000435">
    <property type="term" value="P:positive regulation of transcription from RNA polymerase II promoter by galactose"/>
    <property type="evidence" value="ECO:0007669"/>
    <property type="project" value="TreeGrafter"/>
</dbReference>
<dbReference type="CDD" id="cd12148">
    <property type="entry name" value="fungal_TF_MHR"/>
    <property type="match status" value="1"/>
</dbReference>
<dbReference type="InterPro" id="IPR051127">
    <property type="entry name" value="Fungal_SecMet_Regulators"/>
</dbReference>
<dbReference type="InterPro" id="IPR007219">
    <property type="entry name" value="Transcription_factor_dom_fun"/>
</dbReference>
<dbReference type="PANTHER" id="PTHR47424">
    <property type="entry name" value="REGULATORY PROTEIN GAL4"/>
    <property type="match status" value="1"/>
</dbReference>
<dbReference type="PANTHER" id="PTHR47424:SF3">
    <property type="entry name" value="REGULATORY PROTEIN GAL4"/>
    <property type="match status" value="1"/>
</dbReference>
<dbReference type="Pfam" id="PF04082">
    <property type="entry name" value="Fungal_trans"/>
    <property type="match status" value="1"/>
</dbReference>
<dbReference type="SMART" id="SM00906">
    <property type="entry name" value="Fungal_trans"/>
    <property type="match status" value="1"/>
</dbReference>
<comment type="function">
    <text evidence="2">Transcription factor that acts in concert with sorR1 which is a transcriptional activator of the gene cluster that mediates the biosynthesis of sorbicillinoids, a diverse group of yellow secondary metabolites that restrict growth of competing pathogenic fungi but not of bacteria (PubMed:28618182).</text>
</comment>
<comment type="subcellular location">
    <subcellularLocation>
        <location evidence="4">Nucleus</location>
    </subcellularLocation>
</comment>
<comment type="disruption phenotype">
    <text evidence="2">Has low impact on expression of the sorbicillin biosynthesis gene cluster but, except for very low levels of dihydrosorbicillinol, impairs the production of sorbicillinoids (PubMed:28618182).</text>
</comment>
<comment type="caution">
    <text evidence="4">Due to a highly divergent N-terminal sequence, the DNA-binding zinc finger could not be predicted.</text>
</comment>
<name>SORR2_PENRW</name>
<keyword id="KW-0238">DNA-binding</keyword>
<keyword id="KW-0539">Nucleus</keyword>
<keyword id="KW-1185">Reference proteome</keyword>
<keyword id="KW-0804">Transcription</keyword>
<keyword id="KW-0805">Transcription regulation</keyword>
<organism>
    <name type="scientific">Penicillium rubens (strain ATCC 28089 / DSM 1075 / NRRL 1951 / Wisconsin 54-1255)</name>
    <name type="common">Penicillium chrysogenum</name>
    <dbReference type="NCBI Taxonomy" id="500485"/>
    <lineage>
        <taxon>Eukaryota</taxon>
        <taxon>Fungi</taxon>
        <taxon>Dikarya</taxon>
        <taxon>Ascomycota</taxon>
        <taxon>Pezizomycotina</taxon>
        <taxon>Eurotiomycetes</taxon>
        <taxon>Eurotiomycetidae</taxon>
        <taxon>Eurotiales</taxon>
        <taxon>Aspergillaceae</taxon>
        <taxon>Penicillium</taxon>
        <taxon>Penicillium chrysogenum species complex</taxon>
    </lineage>
</organism>
<sequence length="684" mass="76675">MENGCTSHWLLSRIAGSESRLANNRAFRCGSIEKAASYLIGELLIINQAEAKSNKRLPKFVHKADTYHKACARCKARGKTCAYGQGAVEKQTVHKPRGQASSVHMPVPMLVPPISSAPSLETPPESVAASPPTVDSIPVSHHVNEDPEAEPDLEKNRAYYTAHGRFAGQVAAAINERAGLIPATCNQVPLVDAPLFGDLNLPSQSCALSSSTELPPRAYADQLIDIYWQHVDPMEPVLDRQRFLENYEKAYSTPITPLCADYDLWLGILNVVFALAVQRQELNPLHQRNEEANRFFQRAWVLLPAESMLWKPGSLELVQCLMLMNRYLHCTNNQQKTWTTAGLAMRIAQSMCCHLTETPLLKGSSDDKALKQKVWASCVALDRCISWSLGKTSALVLIPSPPPSSPQQLGENAMHDTLGLRLHEIGNQIQLAQIQNRTSLAARFRPPLLSQQDEYHNAALQLDACLQDWENSIPSDWQPRNLRMVTDRSSRAERYLLHLRYLHHRIFLYRPMLARFYAMKPDTQPLHKSPSLSHRLLRESASMCIEAAQQVASLVNETLEPDEPIGLLPWWYRIYYLHIAGANFLAAMFRSELFTDSVSQSWESVMLALRAHEHLSPYVQQCLWTFETLAARITGKPYPSMDGGGCGLMVDGSSGVSFDDIFKDINFDFDNFIFGPEDFGEGLV</sequence>
<gene>
    <name evidence="3" type="primary">sorR2</name>
    <name type="ORF">Pc21g05090</name>
</gene>
<protein>
    <recommendedName>
        <fullName evidence="3">Sorbicillinoid biosynthetic cluster transcription factor 2</fullName>
    </recommendedName>
</protein>
<evidence type="ECO:0000256" key="1">
    <source>
        <dbReference type="SAM" id="MobiDB-lite"/>
    </source>
</evidence>
<evidence type="ECO:0000269" key="2">
    <source>
    </source>
</evidence>
<evidence type="ECO:0000303" key="3">
    <source>
    </source>
</evidence>
<evidence type="ECO:0000305" key="4"/>